<organism>
    <name type="scientific">Agelenopsis aperta</name>
    <name type="common">North American funnel-web spider</name>
    <name type="synonym">Agelenopsis gertschi</name>
    <dbReference type="NCBI Taxonomy" id="6908"/>
    <lineage>
        <taxon>Eukaryota</taxon>
        <taxon>Metazoa</taxon>
        <taxon>Ecdysozoa</taxon>
        <taxon>Arthropoda</taxon>
        <taxon>Chelicerata</taxon>
        <taxon>Arachnida</taxon>
        <taxon>Araneae</taxon>
        <taxon>Araneomorphae</taxon>
        <taxon>Entelegynae</taxon>
        <taxon>Agelenidae</taxon>
        <taxon>Agelenopsis</taxon>
    </lineage>
</organism>
<keyword id="KW-0108">Calcium channel impairing toxin</keyword>
<keyword id="KW-0903">Direct protein sequencing</keyword>
<keyword id="KW-0872">Ion channel impairing toxin</keyword>
<keyword id="KW-0528">Neurotoxin</keyword>
<keyword id="KW-0638">Presynaptic neurotoxin</keyword>
<keyword id="KW-0964">Secreted</keyword>
<keyword id="KW-0800">Toxin</keyword>
<keyword id="KW-1218">Voltage-gated calcium channel impairing toxin</keyword>
<name>TOG2A_AGEAP</name>
<feature type="chain" id="PRO_0000087605" description="Omega-agatoxin-Aa2a">
    <location>
        <begin position="1"/>
        <end position="28" status="greater than"/>
    </location>
</feature>
<feature type="non-terminal residue">
    <location>
        <position position="28"/>
    </location>
</feature>
<accession>P15971</accession>
<protein>
    <recommendedName>
        <fullName>Omega-agatoxin-Aa2a</fullName>
        <shortName>Omega-AGTX-Aa2a</shortName>
    </recommendedName>
    <alternativeName>
        <fullName>Omega-agatoxin IIA</fullName>
        <shortName>Omega-Aga-IIA</shortName>
    </alternativeName>
    <alternativeName>
        <fullName>Omega-agatoxin-2A</fullName>
    </alternativeName>
</protein>
<comment type="function">
    <text>Omega-agatoxin are antagonist of voltage-gated calcium channels. They block insect neuromuscular transmission presynaptically. Potent blocker of N-type calcium channels (Cav2.2/CACNA1B).</text>
</comment>
<comment type="subcellular location">
    <subcellularLocation>
        <location>Secreted</location>
    </subcellularLocation>
</comment>
<comment type="tissue specificity">
    <text>Expressed by the venom gland.</text>
</comment>
<comment type="similarity">
    <text evidence="1">Belongs to the neurotoxin 04 (omega-agtx) family. 03 (type II/III omega-agtx) subfamily.</text>
</comment>
<proteinExistence type="evidence at protein level"/>
<sequence length="28" mass="3053">GCIEIGGDCDGYQEKSYCQCCRNNGFCS</sequence>
<evidence type="ECO:0000305" key="1"/>
<reference key="1">
    <citation type="journal article" date="1990" name="J. Biol. Chem.">
        <title>Omega-agatoxins: novel calcium channel antagonists of two subtypes from funnel web spider (Agelenopsis aperta) venom.</title>
        <authorList>
            <person name="Adams M.E."/>
            <person name="Bindokas V.P."/>
            <person name="Hasegawa L."/>
            <person name="Venema V.J."/>
        </authorList>
    </citation>
    <scope>PROTEIN SEQUENCE</scope>
    <source>
        <tissue>Venom</tissue>
    </source>
</reference>
<dbReference type="PIR" id="C34923">
    <property type="entry name" value="C34923"/>
</dbReference>
<dbReference type="ArachnoServer" id="AS000177">
    <property type="toxin name" value="omega-agatoxin-Aa2a (N-terminal fragment)"/>
</dbReference>
<dbReference type="GO" id="GO:0005576">
    <property type="term" value="C:extracellular region"/>
    <property type="evidence" value="ECO:0007669"/>
    <property type="project" value="UniProtKB-SubCell"/>
</dbReference>
<dbReference type="GO" id="GO:0044231">
    <property type="term" value="C:host cell presynaptic membrane"/>
    <property type="evidence" value="ECO:0007669"/>
    <property type="project" value="UniProtKB-KW"/>
</dbReference>
<dbReference type="GO" id="GO:0005246">
    <property type="term" value="F:calcium channel regulator activity"/>
    <property type="evidence" value="ECO:0007669"/>
    <property type="project" value="UniProtKB-KW"/>
</dbReference>
<dbReference type="GO" id="GO:0090729">
    <property type="term" value="F:toxin activity"/>
    <property type="evidence" value="ECO:0007669"/>
    <property type="project" value="UniProtKB-KW"/>
</dbReference>
<dbReference type="InterPro" id="IPR005853">
    <property type="entry name" value="Omega-agatoxin_II/III_CS"/>
</dbReference>
<dbReference type="InterPro" id="IPR013605">
    <property type="entry name" value="Toxin_34"/>
</dbReference>
<dbReference type="Pfam" id="PF08396">
    <property type="entry name" value="Toxin_34"/>
    <property type="match status" value="1"/>
</dbReference>
<dbReference type="PROSITE" id="PS60023">
    <property type="entry name" value="OMEGA_AGA_II_III"/>
    <property type="match status" value="1"/>
</dbReference>